<organism>
    <name type="scientific">Arabidopsis thaliana</name>
    <name type="common">Mouse-ear cress</name>
    <dbReference type="NCBI Taxonomy" id="3702"/>
    <lineage>
        <taxon>Eukaryota</taxon>
        <taxon>Viridiplantae</taxon>
        <taxon>Streptophyta</taxon>
        <taxon>Embryophyta</taxon>
        <taxon>Tracheophyta</taxon>
        <taxon>Spermatophyta</taxon>
        <taxon>Magnoliopsida</taxon>
        <taxon>eudicotyledons</taxon>
        <taxon>Gunneridae</taxon>
        <taxon>Pentapetalae</taxon>
        <taxon>rosids</taxon>
        <taxon>malvids</taxon>
        <taxon>Brassicales</taxon>
        <taxon>Brassicaceae</taxon>
        <taxon>Camelineae</taxon>
        <taxon>Arabidopsis</taxon>
    </lineage>
</organism>
<dbReference type="EMBL" id="AF007270">
    <property type="status" value="NOT_ANNOTATED_CDS"/>
    <property type="molecule type" value="Genomic_DNA"/>
</dbReference>
<dbReference type="EMBL" id="CP002688">
    <property type="protein sequence ID" value="AED93599.1"/>
    <property type="molecule type" value="Genomic_DNA"/>
</dbReference>
<dbReference type="EMBL" id="CP002688">
    <property type="protein sequence ID" value="AED93600.1"/>
    <property type="molecule type" value="Genomic_DNA"/>
</dbReference>
<dbReference type="EMBL" id="CP002688">
    <property type="protein sequence ID" value="AED93601.1"/>
    <property type="molecule type" value="Genomic_DNA"/>
</dbReference>
<dbReference type="EMBL" id="BX830163">
    <property type="status" value="NOT_ANNOTATED_CDS"/>
    <property type="molecule type" value="mRNA"/>
</dbReference>
<dbReference type="EMBL" id="BT020242">
    <property type="protein sequence ID" value="AAV74236.1"/>
    <property type="molecule type" value="mRNA"/>
</dbReference>
<dbReference type="EMBL" id="BT020518">
    <property type="protein sequence ID" value="AAW39019.1"/>
    <property type="molecule type" value="mRNA"/>
</dbReference>
<dbReference type="RefSeq" id="NP_001031946.1">
    <molecule id="F4K1B4-2"/>
    <property type="nucleotide sequence ID" value="NM_001036869.2"/>
</dbReference>
<dbReference type="RefSeq" id="NP_568487.1">
    <molecule id="F4K1B4-1"/>
    <property type="nucleotide sequence ID" value="NM_122559.2"/>
</dbReference>
<dbReference type="RefSeq" id="NP_974840.1">
    <molecule id="F4K1B4-1"/>
    <property type="nucleotide sequence ID" value="NM_203111.2"/>
</dbReference>
<dbReference type="SMR" id="F4K1B4"/>
<dbReference type="FunCoup" id="F4K1B4">
    <property type="interactions" value="51"/>
</dbReference>
<dbReference type="STRING" id="3702.F4K1B4"/>
<dbReference type="iPTMnet" id="F4K1B4"/>
<dbReference type="PaxDb" id="3702-AT5G26770.1"/>
<dbReference type="EnsemblPlants" id="AT5G26770.1">
    <molecule id="F4K1B4-1"/>
    <property type="protein sequence ID" value="AT5G26770.1"/>
    <property type="gene ID" value="AT5G26770"/>
</dbReference>
<dbReference type="EnsemblPlants" id="AT5G26770.2">
    <molecule id="F4K1B4-1"/>
    <property type="protein sequence ID" value="AT5G26770.2"/>
    <property type="gene ID" value="AT5G26770"/>
</dbReference>
<dbReference type="EnsemblPlants" id="AT5G26770.3">
    <molecule id="F4K1B4-2"/>
    <property type="protein sequence ID" value="AT5G26770.3"/>
    <property type="gene ID" value="AT5G26770"/>
</dbReference>
<dbReference type="GeneID" id="832735"/>
<dbReference type="Gramene" id="AT5G26770.1">
    <molecule id="F4K1B4-1"/>
    <property type="protein sequence ID" value="AT5G26770.1"/>
    <property type="gene ID" value="AT5G26770"/>
</dbReference>
<dbReference type="Gramene" id="AT5G26770.2">
    <molecule id="F4K1B4-1"/>
    <property type="protein sequence ID" value="AT5G26770.2"/>
    <property type="gene ID" value="AT5G26770"/>
</dbReference>
<dbReference type="Gramene" id="AT5G26770.3">
    <molecule id="F4K1B4-2"/>
    <property type="protein sequence ID" value="AT5G26770.3"/>
    <property type="gene ID" value="AT5G26770"/>
</dbReference>
<dbReference type="KEGG" id="ath:AT5G26770"/>
<dbReference type="Araport" id="AT5G26770"/>
<dbReference type="TAIR" id="AT5G26770">
    <property type="gene designation" value="ATNEAP2"/>
</dbReference>
<dbReference type="eggNOG" id="ENOG502QUNG">
    <property type="taxonomic scope" value="Eukaryota"/>
</dbReference>
<dbReference type="HOGENOM" id="CLU_077822_0_0_1"/>
<dbReference type="InParanoid" id="F4K1B4"/>
<dbReference type="OMA" id="TGCTEQY"/>
<dbReference type="PRO" id="PR:F4K1B4"/>
<dbReference type="Proteomes" id="UP000006548">
    <property type="component" value="Chromosome 5"/>
</dbReference>
<dbReference type="ExpressionAtlas" id="F4K1B4">
    <property type="expression patterns" value="baseline and differential"/>
</dbReference>
<dbReference type="GO" id="GO:0005635">
    <property type="term" value="C:nuclear envelope"/>
    <property type="evidence" value="ECO:0000314"/>
    <property type="project" value="TAIR"/>
</dbReference>
<dbReference type="GO" id="GO:0005637">
    <property type="term" value="C:nuclear inner membrane"/>
    <property type="evidence" value="ECO:0007669"/>
    <property type="project" value="UniProtKB-SubCell"/>
</dbReference>
<dbReference type="GO" id="GO:0005654">
    <property type="term" value="C:nucleoplasm"/>
    <property type="evidence" value="ECO:0000314"/>
    <property type="project" value="TAIR"/>
</dbReference>
<dbReference type="Gene3D" id="1.20.5.170">
    <property type="match status" value="1"/>
</dbReference>
<dbReference type="InterPro" id="IPR049932">
    <property type="entry name" value="NEAP1-4"/>
</dbReference>
<dbReference type="PANTHER" id="PTHR48145">
    <property type="entry name" value="NUCLEAR ENVELOPE-ASSOCIATED PROTEIN 1"/>
    <property type="match status" value="1"/>
</dbReference>
<dbReference type="PANTHER" id="PTHR48145:SF5">
    <property type="entry name" value="NUCLEAR ENVELOPE-ASSOCIATED PROTEIN 2"/>
    <property type="match status" value="1"/>
</dbReference>
<dbReference type="SUPFAM" id="SSF90257">
    <property type="entry name" value="Myosin rod fragments"/>
    <property type="match status" value="1"/>
</dbReference>
<gene>
    <name evidence="3" type="primary">NEAP2</name>
    <name evidence="6" type="ordered locus">At5g26770</name>
    <name evidence="7" type="ORF">F2P16.30</name>
</gene>
<keyword id="KW-0025">Alternative splicing</keyword>
<keyword id="KW-0175">Coiled coil</keyword>
<keyword id="KW-0472">Membrane</keyword>
<keyword id="KW-0539">Nucleus</keyword>
<keyword id="KW-1185">Reference proteome</keyword>
<keyword id="KW-0812">Transmembrane</keyword>
<keyword id="KW-1133">Transmembrane helix</keyword>
<protein>
    <recommendedName>
        <fullName evidence="3">Nuclear envelope-associated protein 2</fullName>
        <shortName evidence="3">AtNEAP2</shortName>
    </recommendedName>
</protein>
<proteinExistence type="evidence at protein level"/>
<comment type="subunit">
    <text evidence="2">Forms homomers and heteromers with NEAP1 and NEAP3. Interacts with SUN1 and SUN2.</text>
</comment>
<comment type="subcellular location">
    <subcellularLocation>
        <location evidence="2">Nucleus inner membrane</location>
        <topology evidence="1">Single-pass membrane protein</topology>
    </subcellularLocation>
    <subcellularLocation>
        <location evidence="2">Nucleus</location>
        <location evidence="2">Nucleoplasm</location>
    </subcellularLocation>
</comment>
<comment type="alternative products">
    <event type="alternative splicing"/>
    <isoform>
        <id>F4K1B4-1</id>
        <name>1</name>
        <sequence type="displayed"/>
    </isoform>
    <isoform>
        <id>F4K1B4-2</id>
        <name>2</name>
        <sequence type="described" ref="VSP_059089"/>
    </isoform>
</comment>
<name>NEAP2_ARATH</name>
<sequence length="335" mass="38675">MSDSVKTTVDPLLKDLDGKKESFRRNVVSMAAELKQVRGRLVSQEQFFVKESFCRKEAEKKAKNMEMEICKLQKKLEDRNCELVASTSAAEKFLEEVDDLRSQLALTKDIAETSAASAQSAQLQCSVLTEQLDDKTRSLREHEDRVTHLGHQLDNLQRDLKTRECSQKQLREEVMRIEREITEAVAKSGKGTECELRKLLEEVSPKNFERMNMLLAVKDEEIAKLKDDVKLMSAHWKLKTKELESQLERQRRADQELKKKVLKLEFCLQEARSQTRKLQRAGERRDKAIKELSDQITGKQLNESVSGEKQNFWDTSGFKIVVSMSMLILVIISKR</sequence>
<evidence type="ECO:0000255" key="1"/>
<evidence type="ECO:0000269" key="2">
    <source>
    </source>
</evidence>
<evidence type="ECO:0000303" key="3">
    <source>
    </source>
</evidence>
<evidence type="ECO:0000305" key="4"/>
<evidence type="ECO:0000305" key="5">
    <source>
    </source>
</evidence>
<evidence type="ECO:0000312" key="6">
    <source>
        <dbReference type="Araport" id="AT5G26770"/>
    </source>
</evidence>
<evidence type="ECO:0000312" key="7">
    <source>
        <dbReference type="EMBL" id="AF007270"/>
    </source>
</evidence>
<accession>F4K1B4</accession>
<accession>Q5PP55</accession>
<reference key="1">
    <citation type="journal article" date="2000" name="Nature">
        <title>Sequence and analysis of chromosome 5 of the plant Arabidopsis thaliana.</title>
        <authorList>
            <person name="Tabata S."/>
            <person name="Kaneko T."/>
            <person name="Nakamura Y."/>
            <person name="Kotani H."/>
            <person name="Kato T."/>
            <person name="Asamizu E."/>
            <person name="Miyajima N."/>
            <person name="Sasamoto S."/>
            <person name="Kimura T."/>
            <person name="Hosouchi T."/>
            <person name="Kawashima K."/>
            <person name="Kohara M."/>
            <person name="Matsumoto M."/>
            <person name="Matsuno A."/>
            <person name="Muraki A."/>
            <person name="Nakayama S."/>
            <person name="Nakazaki N."/>
            <person name="Naruo K."/>
            <person name="Okumura S."/>
            <person name="Shinpo S."/>
            <person name="Takeuchi C."/>
            <person name="Wada T."/>
            <person name="Watanabe A."/>
            <person name="Yamada M."/>
            <person name="Yasuda M."/>
            <person name="Sato S."/>
            <person name="de la Bastide M."/>
            <person name="Huang E."/>
            <person name="Spiegel L."/>
            <person name="Gnoj L."/>
            <person name="O'Shaughnessy A."/>
            <person name="Preston R."/>
            <person name="Habermann K."/>
            <person name="Murray J."/>
            <person name="Johnson D."/>
            <person name="Rohlfing T."/>
            <person name="Nelson J."/>
            <person name="Stoneking T."/>
            <person name="Pepin K."/>
            <person name="Spieth J."/>
            <person name="Sekhon M."/>
            <person name="Armstrong J."/>
            <person name="Becker M."/>
            <person name="Belter E."/>
            <person name="Cordum H."/>
            <person name="Cordes M."/>
            <person name="Courtney L."/>
            <person name="Courtney W."/>
            <person name="Dante M."/>
            <person name="Du H."/>
            <person name="Edwards J."/>
            <person name="Fryman J."/>
            <person name="Haakensen B."/>
            <person name="Lamar E."/>
            <person name="Latreille P."/>
            <person name="Leonard S."/>
            <person name="Meyer R."/>
            <person name="Mulvaney E."/>
            <person name="Ozersky P."/>
            <person name="Riley A."/>
            <person name="Strowmatt C."/>
            <person name="Wagner-McPherson C."/>
            <person name="Wollam A."/>
            <person name="Yoakum M."/>
            <person name="Bell M."/>
            <person name="Dedhia N."/>
            <person name="Parnell L."/>
            <person name="Shah R."/>
            <person name="Rodriguez M."/>
            <person name="Hoon See L."/>
            <person name="Vil D."/>
            <person name="Baker J."/>
            <person name="Kirchoff K."/>
            <person name="Toth K."/>
            <person name="King L."/>
            <person name="Bahret A."/>
            <person name="Miller B."/>
            <person name="Marra M.A."/>
            <person name="Martienssen R."/>
            <person name="McCombie W.R."/>
            <person name="Wilson R.K."/>
            <person name="Murphy G."/>
            <person name="Bancroft I."/>
            <person name="Volckaert G."/>
            <person name="Wambutt R."/>
            <person name="Duesterhoeft A."/>
            <person name="Stiekema W."/>
            <person name="Pohl T."/>
            <person name="Entian K.-D."/>
            <person name="Terryn N."/>
            <person name="Hartley N."/>
            <person name="Bent E."/>
            <person name="Johnson S."/>
            <person name="Langham S.-A."/>
            <person name="McCullagh B."/>
            <person name="Robben J."/>
            <person name="Grymonprez B."/>
            <person name="Zimmermann W."/>
            <person name="Ramsperger U."/>
            <person name="Wedler H."/>
            <person name="Balke K."/>
            <person name="Wedler E."/>
            <person name="Peters S."/>
            <person name="van Staveren M."/>
            <person name="Dirkse W."/>
            <person name="Mooijman P."/>
            <person name="Klein Lankhorst R."/>
            <person name="Weitzenegger T."/>
            <person name="Bothe G."/>
            <person name="Rose M."/>
            <person name="Hauf J."/>
            <person name="Berneiser S."/>
            <person name="Hempel S."/>
            <person name="Feldpausch M."/>
            <person name="Lamberth S."/>
            <person name="Villarroel R."/>
            <person name="Gielen J."/>
            <person name="Ardiles W."/>
            <person name="Bents O."/>
            <person name="Lemcke K."/>
            <person name="Kolesov G."/>
            <person name="Mayer K.F.X."/>
            <person name="Rudd S."/>
            <person name="Schoof H."/>
            <person name="Schueller C."/>
            <person name="Zaccaria P."/>
            <person name="Mewes H.-W."/>
            <person name="Bevan M."/>
            <person name="Fransz P.F."/>
        </authorList>
    </citation>
    <scope>NUCLEOTIDE SEQUENCE [LARGE SCALE GENOMIC DNA]</scope>
    <source>
        <strain>cv. Columbia</strain>
    </source>
</reference>
<reference key="2">
    <citation type="journal article" date="2017" name="Plant J.">
        <title>Araport11: a complete reannotation of the Arabidopsis thaliana reference genome.</title>
        <authorList>
            <person name="Cheng C.Y."/>
            <person name="Krishnakumar V."/>
            <person name="Chan A.P."/>
            <person name="Thibaud-Nissen F."/>
            <person name="Schobel S."/>
            <person name="Town C.D."/>
        </authorList>
    </citation>
    <scope>GENOME REANNOTATION</scope>
    <source>
        <strain>cv. Columbia</strain>
    </source>
</reference>
<reference key="3">
    <citation type="journal article" date="2004" name="Genome Res.">
        <title>Whole genome sequence comparisons and 'full-length' cDNA sequences: a combined approach to evaluate and improve Arabidopsis genome annotation.</title>
        <authorList>
            <person name="Castelli V."/>
            <person name="Aury J.-M."/>
            <person name="Jaillon O."/>
            <person name="Wincker P."/>
            <person name="Clepet C."/>
            <person name="Menard M."/>
            <person name="Cruaud C."/>
            <person name="Quetier F."/>
            <person name="Scarpelli C."/>
            <person name="Schaechter V."/>
            <person name="Temple G."/>
            <person name="Caboche M."/>
            <person name="Weissenbach J."/>
            <person name="Salanoubat M."/>
        </authorList>
    </citation>
    <scope>NUCLEOTIDE SEQUENCE [LARGE SCALE MRNA] (ISOFORM 1)</scope>
    <source>
        <strain>cv. Columbia</strain>
    </source>
</reference>
<reference key="4">
    <citation type="submission" date="2005-01" db="EMBL/GenBank/DDBJ databases">
        <title>Arabidopsis ORF clones.</title>
        <authorList>
            <person name="Kim C.J."/>
            <person name="Chen H."/>
            <person name="Cheuk R."/>
            <person name="Shinn P."/>
            <person name="Ecker J.R."/>
        </authorList>
    </citation>
    <scope>NUCLEOTIDE SEQUENCE [LARGE SCALE MRNA] (ISOFORM 2)</scope>
    <source>
        <strain>cv. Columbia</strain>
    </source>
</reference>
<reference key="5">
    <citation type="journal article" date="2016" name="J. Exp. Bot.">
        <title>A novel family of plant nuclear envelope-associated proteins.</title>
        <authorList>
            <person name="Pawar V."/>
            <person name="Poulet A."/>
            <person name="Detourne G."/>
            <person name="Tatout C."/>
            <person name="Vanrobays E."/>
            <person name="Evans D.E."/>
            <person name="Graumann K."/>
        </authorList>
    </citation>
    <scope>GENE FAMILY</scope>
    <scope>NOMENCLATURE</scope>
    <scope>SUBCELLULAR LOCATION</scope>
    <scope>SUBUNIT</scope>
    <scope>INTERACTION WITH NEAP1; NEAP3; SUN1 AND SUN2</scope>
</reference>
<feature type="chain" id="PRO_0000441687" description="Nuclear envelope-associated protein 2">
    <location>
        <begin position="1"/>
        <end position="335"/>
    </location>
</feature>
<feature type="transmembrane region" description="Helical" evidence="1">
    <location>
        <begin position="312"/>
        <end position="329"/>
    </location>
</feature>
<feature type="coiled-coil region" evidence="1">
    <location>
        <begin position="55"/>
        <end position="85"/>
    </location>
</feature>
<feature type="coiled-coil region" evidence="1">
    <location>
        <begin position="125"/>
        <end position="260"/>
    </location>
</feature>
<feature type="short sequence motif" description="Bipartite nuclear localization signal" evidence="5">
    <location>
        <begin position="239"/>
        <end position="260"/>
    </location>
</feature>
<feature type="splice variant" id="VSP_059089" description="In isoform 2.">
    <location>
        <begin position="261"/>
        <end position="280"/>
    </location>
</feature>
<feature type="sequence conflict" description="In Ref. 3; BX830163." evidence="4" ref="3">
    <original>F</original>
    <variation>L</variation>
    <location>
        <position position="53"/>
    </location>
</feature>